<reference key="1">
    <citation type="submission" date="2009-02" db="EMBL/GenBank/DDBJ databases">
        <title>Genome sequence of Bacillus cereus 03BB102.</title>
        <authorList>
            <person name="Dodson R.J."/>
            <person name="Jackson P."/>
            <person name="Munk A.C."/>
            <person name="Brettin T."/>
            <person name="Bruce D."/>
            <person name="Detter C."/>
            <person name="Tapia R."/>
            <person name="Han C."/>
            <person name="Sutton G."/>
            <person name="Sims D."/>
        </authorList>
    </citation>
    <scope>NUCLEOTIDE SEQUENCE [LARGE SCALE GENOMIC DNA]</scope>
    <source>
        <strain>03BB102</strain>
    </source>
</reference>
<accession>C1EN91</accession>
<comment type="function">
    <text evidence="1">Catalyzes the hydrolytic cleavage of the carbon-nitrogen bond in imidazolone-5-propanoate to yield N-formimidoyl-L-glutamate. It is the third step in the universal histidine degradation pathway.</text>
</comment>
<comment type="catalytic activity">
    <reaction evidence="1">
        <text>4-imidazolone-5-propanoate + H2O = N-formimidoyl-L-glutamate</text>
        <dbReference type="Rhea" id="RHEA:23660"/>
        <dbReference type="ChEBI" id="CHEBI:15377"/>
        <dbReference type="ChEBI" id="CHEBI:58928"/>
        <dbReference type="ChEBI" id="CHEBI:77893"/>
        <dbReference type="EC" id="3.5.2.7"/>
    </reaction>
</comment>
<comment type="cofactor">
    <cofactor evidence="1">
        <name>Zn(2+)</name>
        <dbReference type="ChEBI" id="CHEBI:29105"/>
    </cofactor>
    <cofactor evidence="1">
        <name>Fe(3+)</name>
        <dbReference type="ChEBI" id="CHEBI:29034"/>
    </cofactor>
    <text evidence="1">Binds 1 zinc or iron ion per subunit.</text>
</comment>
<comment type="pathway">
    <text evidence="1">Amino-acid degradation; L-histidine degradation into L-glutamate; N-formimidoyl-L-glutamate from L-histidine: step 3/3.</text>
</comment>
<comment type="subcellular location">
    <subcellularLocation>
        <location evidence="1">Cytoplasm</location>
    </subcellularLocation>
</comment>
<comment type="similarity">
    <text evidence="1">Belongs to the metallo-dependent hydrolases superfamily. HutI family.</text>
</comment>
<proteinExistence type="inferred from homology"/>
<protein>
    <recommendedName>
        <fullName evidence="1">Imidazolonepropionase</fullName>
        <ecNumber evidence="1">3.5.2.7</ecNumber>
    </recommendedName>
    <alternativeName>
        <fullName evidence="1">Imidazolone-5-propionate hydrolase</fullName>
    </alternativeName>
</protein>
<organism>
    <name type="scientific">Bacillus cereus (strain 03BB102)</name>
    <dbReference type="NCBI Taxonomy" id="572264"/>
    <lineage>
        <taxon>Bacteria</taxon>
        <taxon>Bacillati</taxon>
        <taxon>Bacillota</taxon>
        <taxon>Bacilli</taxon>
        <taxon>Bacillales</taxon>
        <taxon>Bacillaceae</taxon>
        <taxon>Bacillus</taxon>
        <taxon>Bacillus cereus group</taxon>
    </lineage>
</organism>
<gene>
    <name evidence="1" type="primary">hutI</name>
    <name type="ordered locus">BCA_3744</name>
</gene>
<evidence type="ECO:0000255" key="1">
    <source>
        <dbReference type="HAMAP-Rule" id="MF_00372"/>
    </source>
</evidence>
<name>HUTI_BACC3</name>
<sequence>MLDTLLINIGQLLTMDQEDGLLRREAMNTLPVIENGAVGIENGVITFVGTAEEAKGLQAKEVIDCGGKMVSPGLVDPHTHLVFGGSRENEIALKLQGVPYLEILEQGGGILSTVNATKQASKEELVQKAKFHLDRMLSFGVTTVEAKSGYGLDDETEWKQLEATAQLQKEHPIDLVSTFLGAHAVPKEYKGRSKEFLQWMLDLLPEMKEKQLAEFVDIFCETGVFSVEESKEFLLKAKELGFDVKIHADEIDPLGGAEAAAEIGAASADHLVGASDKGIEMLANSNTVATLLPGTTFYLNKESFARGRKMIDEGVAVALATDFNPGSCPTENIQLIMSIAMLKLKMTPEEVWNAVTVNSSYAINRGEVAGKIRVGRKADLVLWDAYNYAYVPYHYGVSHVNTVWKNGNIAYTRGEQSWSTATI</sequence>
<feature type="chain" id="PRO_1000133879" description="Imidazolonepropionase">
    <location>
        <begin position="1"/>
        <end position="423"/>
    </location>
</feature>
<feature type="binding site" evidence="1">
    <location>
        <position position="78"/>
    </location>
    <ligand>
        <name>Fe(3+)</name>
        <dbReference type="ChEBI" id="CHEBI:29034"/>
    </ligand>
</feature>
<feature type="binding site" evidence="1">
    <location>
        <position position="78"/>
    </location>
    <ligand>
        <name>Zn(2+)</name>
        <dbReference type="ChEBI" id="CHEBI:29105"/>
    </ligand>
</feature>
<feature type="binding site" evidence="1">
    <location>
        <position position="80"/>
    </location>
    <ligand>
        <name>Fe(3+)</name>
        <dbReference type="ChEBI" id="CHEBI:29034"/>
    </ligand>
</feature>
<feature type="binding site" evidence="1">
    <location>
        <position position="80"/>
    </location>
    <ligand>
        <name>Zn(2+)</name>
        <dbReference type="ChEBI" id="CHEBI:29105"/>
    </ligand>
</feature>
<feature type="binding site" evidence="1">
    <location>
        <position position="87"/>
    </location>
    <ligand>
        <name>4-imidazolone-5-propanoate</name>
        <dbReference type="ChEBI" id="CHEBI:77893"/>
    </ligand>
</feature>
<feature type="binding site" evidence="1">
    <location>
        <position position="150"/>
    </location>
    <ligand>
        <name>4-imidazolone-5-propanoate</name>
        <dbReference type="ChEBI" id="CHEBI:77893"/>
    </ligand>
</feature>
<feature type="binding site" evidence="1">
    <location>
        <position position="150"/>
    </location>
    <ligand>
        <name>N-formimidoyl-L-glutamate</name>
        <dbReference type="ChEBI" id="CHEBI:58928"/>
    </ligand>
</feature>
<feature type="binding site" evidence="1">
    <location>
        <position position="183"/>
    </location>
    <ligand>
        <name>4-imidazolone-5-propanoate</name>
        <dbReference type="ChEBI" id="CHEBI:77893"/>
    </ligand>
</feature>
<feature type="binding site" evidence="1">
    <location>
        <position position="247"/>
    </location>
    <ligand>
        <name>Fe(3+)</name>
        <dbReference type="ChEBI" id="CHEBI:29034"/>
    </ligand>
</feature>
<feature type="binding site" evidence="1">
    <location>
        <position position="247"/>
    </location>
    <ligand>
        <name>Zn(2+)</name>
        <dbReference type="ChEBI" id="CHEBI:29105"/>
    </ligand>
</feature>
<feature type="binding site" evidence="1">
    <location>
        <position position="250"/>
    </location>
    <ligand>
        <name>4-imidazolone-5-propanoate</name>
        <dbReference type="ChEBI" id="CHEBI:77893"/>
    </ligand>
</feature>
<feature type="binding site" evidence="1">
    <location>
        <position position="322"/>
    </location>
    <ligand>
        <name>Fe(3+)</name>
        <dbReference type="ChEBI" id="CHEBI:29034"/>
    </ligand>
</feature>
<feature type="binding site" evidence="1">
    <location>
        <position position="322"/>
    </location>
    <ligand>
        <name>Zn(2+)</name>
        <dbReference type="ChEBI" id="CHEBI:29105"/>
    </ligand>
</feature>
<feature type="binding site" evidence="1">
    <location>
        <position position="324"/>
    </location>
    <ligand>
        <name>N-formimidoyl-L-glutamate</name>
        <dbReference type="ChEBI" id="CHEBI:58928"/>
    </ligand>
</feature>
<feature type="binding site" evidence="1">
    <location>
        <position position="326"/>
    </location>
    <ligand>
        <name>N-formimidoyl-L-glutamate</name>
        <dbReference type="ChEBI" id="CHEBI:58928"/>
    </ligand>
</feature>
<feature type="binding site" evidence="1">
    <location>
        <position position="327"/>
    </location>
    <ligand>
        <name>4-imidazolone-5-propanoate</name>
        <dbReference type="ChEBI" id="CHEBI:77893"/>
    </ligand>
</feature>
<dbReference type="EC" id="3.5.2.7" evidence="1"/>
<dbReference type="EMBL" id="CP001407">
    <property type="protein sequence ID" value="ACO27702.1"/>
    <property type="molecule type" value="Genomic_DNA"/>
</dbReference>
<dbReference type="RefSeq" id="WP_000887530.1">
    <property type="nucleotide sequence ID" value="NZ_CP009318.1"/>
</dbReference>
<dbReference type="SMR" id="C1EN91"/>
<dbReference type="KEGG" id="bcx:BCA_3744"/>
<dbReference type="PATRIC" id="fig|572264.18.peg.3705"/>
<dbReference type="UniPathway" id="UPA00379">
    <property type="reaction ID" value="UER00551"/>
</dbReference>
<dbReference type="Proteomes" id="UP000002210">
    <property type="component" value="Chromosome"/>
</dbReference>
<dbReference type="GO" id="GO:0005737">
    <property type="term" value="C:cytoplasm"/>
    <property type="evidence" value="ECO:0007669"/>
    <property type="project" value="UniProtKB-SubCell"/>
</dbReference>
<dbReference type="GO" id="GO:0050480">
    <property type="term" value="F:imidazolonepropionase activity"/>
    <property type="evidence" value="ECO:0007669"/>
    <property type="project" value="UniProtKB-UniRule"/>
</dbReference>
<dbReference type="GO" id="GO:0005506">
    <property type="term" value="F:iron ion binding"/>
    <property type="evidence" value="ECO:0007669"/>
    <property type="project" value="UniProtKB-UniRule"/>
</dbReference>
<dbReference type="GO" id="GO:0008270">
    <property type="term" value="F:zinc ion binding"/>
    <property type="evidence" value="ECO:0007669"/>
    <property type="project" value="UniProtKB-UniRule"/>
</dbReference>
<dbReference type="GO" id="GO:0019556">
    <property type="term" value="P:L-histidine catabolic process to glutamate and formamide"/>
    <property type="evidence" value="ECO:0007669"/>
    <property type="project" value="UniProtKB-UniPathway"/>
</dbReference>
<dbReference type="GO" id="GO:0019557">
    <property type="term" value="P:L-histidine catabolic process to glutamate and formate"/>
    <property type="evidence" value="ECO:0007669"/>
    <property type="project" value="UniProtKB-UniPathway"/>
</dbReference>
<dbReference type="CDD" id="cd01296">
    <property type="entry name" value="Imidazolone-5PH"/>
    <property type="match status" value="1"/>
</dbReference>
<dbReference type="FunFam" id="3.20.20.140:FF:000007">
    <property type="entry name" value="Imidazolonepropionase"/>
    <property type="match status" value="1"/>
</dbReference>
<dbReference type="Gene3D" id="3.20.20.140">
    <property type="entry name" value="Metal-dependent hydrolases"/>
    <property type="match status" value="1"/>
</dbReference>
<dbReference type="Gene3D" id="2.30.40.10">
    <property type="entry name" value="Urease, subunit C, domain 1"/>
    <property type="match status" value="1"/>
</dbReference>
<dbReference type="HAMAP" id="MF_00372">
    <property type="entry name" value="HutI"/>
    <property type="match status" value="1"/>
</dbReference>
<dbReference type="InterPro" id="IPR006680">
    <property type="entry name" value="Amidohydro-rel"/>
</dbReference>
<dbReference type="InterPro" id="IPR005920">
    <property type="entry name" value="HutI"/>
</dbReference>
<dbReference type="InterPro" id="IPR011059">
    <property type="entry name" value="Metal-dep_hydrolase_composite"/>
</dbReference>
<dbReference type="InterPro" id="IPR032466">
    <property type="entry name" value="Metal_Hydrolase"/>
</dbReference>
<dbReference type="NCBIfam" id="TIGR01224">
    <property type="entry name" value="hutI"/>
    <property type="match status" value="1"/>
</dbReference>
<dbReference type="PANTHER" id="PTHR42752">
    <property type="entry name" value="IMIDAZOLONEPROPIONASE"/>
    <property type="match status" value="1"/>
</dbReference>
<dbReference type="PANTHER" id="PTHR42752:SF1">
    <property type="entry name" value="IMIDAZOLONEPROPIONASE-RELATED"/>
    <property type="match status" value="1"/>
</dbReference>
<dbReference type="Pfam" id="PF01979">
    <property type="entry name" value="Amidohydro_1"/>
    <property type="match status" value="1"/>
</dbReference>
<dbReference type="SUPFAM" id="SSF51338">
    <property type="entry name" value="Composite domain of metallo-dependent hydrolases"/>
    <property type="match status" value="1"/>
</dbReference>
<dbReference type="SUPFAM" id="SSF51556">
    <property type="entry name" value="Metallo-dependent hydrolases"/>
    <property type="match status" value="1"/>
</dbReference>
<keyword id="KW-0963">Cytoplasm</keyword>
<keyword id="KW-0369">Histidine metabolism</keyword>
<keyword id="KW-0378">Hydrolase</keyword>
<keyword id="KW-0408">Iron</keyword>
<keyword id="KW-0479">Metal-binding</keyword>
<keyword id="KW-0862">Zinc</keyword>